<evidence type="ECO:0000255" key="1">
    <source>
        <dbReference type="HAMAP-Rule" id="MF_00736"/>
    </source>
</evidence>
<evidence type="ECO:0000305" key="2"/>
<dbReference type="EMBL" id="CP000668">
    <property type="protein sequence ID" value="ABP42095.1"/>
    <property type="molecule type" value="Genomic_DNA"/>
</dbReference>
<dbReference type="RefSeq" id="WP_002210672.1">
    <property type="nucleotide sequence ID" value="NZ_CP009715.1"/>
</dbReference>
<dbReference type="SMR" id="A4TS33"/>
<dbReference type="GeneID" id="96663772"/>
<dbReference type="KEGG" id="ypp:YPDSF_3749"/>
<dbReference type="PATRIC" id="fig|386656.14.peg.774"/>
<dbReference type="GO" id="GO:0022625">
    <property type="term" value="C:cytosolic large ribosomal subunit"/>
    <property type="evidence" value="ECO:0007669"/>
    <property type="project" value="TreeGrafter"/>
</dbReference>
<dbReference type="GO" id="GO:0070180">
    <property type="term" value="F:large ribosomal subunit rRNA binding"/>
    <property type="evidence" value="ECO:0007669"/>
    <property type="project" value="UniProtKB-UniRule"/>
</dbReference>
<dbReference type="GO" id="GO:0003735">
    <property type="term" value="F:structural constituent of ribosome"/>
    <property type="evidence" value="ECO:0007669"/>
    <property type="project" value="InterPro"/>
</dbReference>
<dbReference type="GO" id="GO:0006412">
    <property type="term" value="P:translation"/>
    <property type="evidence" value="ECO:0007669"/>
    <property type="project" value="UniProtKB-UniRule"/>
</dbReference>
<dbReference type="CDD" id="cd00349">
    <property type="entry name" value="Ribosomal_L11"/>
    <property type="match status" value="1"/>
</dbReference>
<dbReference type="FunFam" id="1.10.10.250:FF:000001">
    <property type="entry name" value="50S ribosomal protein L11"/>
    <property type="match status" value="1"/>
</dbReference>
<dbReference type="FunFam" id="3.30.1550.10:FF:000001">
    <property type="entry name" value="50S ribosomal protein L11"/>
    <property type="match status" value="1"/>
</dbReference>
<dbReference type="Gene3D" id="1.10.10.250">
    <property type="entry name" value="Ribosomal protein L11, C-terminal domain"/>
    <property type="match status" value="1"/>
</dbReference>
<dbReference type="Gene3D" id="3.30.1550.10">
    <property type="entry name" value="Ribosomal protein L11/L12, N-terminal domain"/>
    <property type="match status" value="1"/>
</dbReference>
<dbReference type="HAMAP" id="MF_00736">
    <property type="entry name" value="Ribosomal_uL11"/>
    <property type="match status" value="1"/>
</dbReference>
<dbReference type="InterPro" id="IPR000911">
    <property type="entry name" value="Ribosomal_uL11"/>
</dbReference>
<dbReference type="InterPro" id="IPR006519">
    <property type="entry name" value="Ribosomal_uL11_bac-typ"/>
</dbReference>
<dbReference type="InterPro" id="IPR020783">
    <property type="entry name" value="Ribosomal_uL11_C"/>
</dbReference>
<dbReference type="InterPro" id="IPR036769">
    <property type="entry name" value="Ribosomal_uL11_C_sf"/>
</dbReference>
<dbReference type="InterPro" id="IPR020785">
    <property type="entry name" value="Ribosomal_uL11_CS"/>
</dbReference>
<dbReference type="InterPro" id="IPR020784">
    <property type="entry name" value="Ribosomal_uL11_N"/>
</dbReference>
<dbReference type="InterPro" id="IPR036796">
    <property type="entry name" value="Ribosomal_uL11_N_sf"/>
</dbReference>
<dbReference type="NCBIfam" id="TIGR01632">
    <property type="entry name" value="L11_bact"/>
    <property type="match status" value="1"/>
</dbReference>
<dbReference type="PANTHER" id="PTHR11661">
    <property type="entry name" value="60S RIBOSOMAL PROTEIN L12"/>
    <property type="match status" value="1"/>
</dbReference>
<dbReference type="PANTHER" id="PTHR11661:SF1">
    <property type="entry name" value="LARGE RIBOSOMAL SUBUNIT PROTEIN UL11M"/>
    <property type="match status" value="1"/>
</dbReference>
<dbReference type="Pfam" id="PF00298">
    <property type="entry name" value="Ribosomal_L11"/>
    <property type="match status" value="1"/>
</dbReference>
<dbReference type="Pfam" id="PF03946">
    <property type="entry name" value="Ribosomal_L11_N"/>
    <property type="match status" value="1"/>
</dbReference>
<dbReference type="SMART" id="SM00649">
    <property type="entry name" value="RL11"/>
    <property type="match status" value="1"/>
</dbReference>
<dbReference type="SUPFAM" id="SSF54747">
    <property type="entry name" value="Ribosomal L11/L12e N-terminal domain"/>
    <property type="match status" value="1"/>
</dbReference>
<dbReference type="SUPFAM" id="SSF46906">
    <property type="entry name" value="Ribosomal protein L11, C-terminal domain"/>
    <property type="match status" value="1"/>
</dbReference>
<dbReference type="PROSITE" id="PS00359">
    <property type="entry name" value="RIBOSOMAL_L11"/>
    <property type="match status" value="1"/>
</dbReference>
<sequence>MAKKVQAYVKLQVAAGMANPSPPVGPALGQQGVNIMEFCKAFNAKTESIEKGLPIPVVITVYSDRSFTFVTKTPPAAVLLKKAAGIKSGSGVPNKDKVGKVTSAQVREIAETKAADMTGSDVDAMMRSIEGTAHSMGLVVEG</sequence>
<reference key="1">
    <citation type="submission" date="2007-02" db="EMBL/GenBank/DDBJ databases">
        <title>Complete sequence of chromosome of Yersinia pestis Pestoides F.</title>
        <authorList>
            <consortium name="US DOE Joint Genome Institute"/>
            <person name="Copeland A."/>
            <person name="Lucas S."/>
            <person name="Lapidus A."/>
            <person name="Barry K."/>
            <person name="Detter J.C."/>
            <person name="Glavina del Rio T."/>
            <person name="Hammon N."/>
            <person name="Israni S."/>
            <person name="Dalin E."/>
            <person name="Tice H."/>
            <person name="Pitluck S."/>
            <person name="Di Bartolo G."/>
            <person name="Chain P."/>
            <person name="Malfatti S."/>
            <person name="Shin M."/>
            <person name="Vergez L."/>
            <person name="Schmutz J."/>
            <person name="Larimer F."/>
            <person name="Land M."/>
            <person name="Hauser L."/>
            <person name="Worsham P."/>
            <person name="Chu M."/>
            <person name="Bearden S."/>
            <person name="Garcia E."/>
            <person name="Richardson P."/>
        </authorList>
    </citation>
    <scope>NUCLEOTIDE SEQUENCE [LARGE SCALE GENOMIC DNA]</scope>
    <source>
        <strain>Pestoides F</strain>
    </source>
</reference>
<protein>
    <recommendedName>
        <fullName evidence="1">Large ribosomal subunit protein uL11</fullName>
    </recommendedName>
    <alternativeName>
        <fullName evidence="2">50S ribosomal protein L11</fullName>
    </alternativeName>
</protein>
<name>RL11_YERPP</name>
<organism>
    <name type="scientific">Yersinia pestis (strain Pestoides F)</name>
    <dbReference type="NCBI Taxonomy" id="386656"/>
    <lineage>
        <taxon>Bacteria</taxon>
        <taxon>Pseudomonadati</taxon>
        <taxon>Pseudomonadota</taxon>
        <taxon>Gammaproteobacteria</taxon>
        <taxon>Enterobacterales</taxon>
        <taxon>Yersiniaceae</taxon>
        <taxon>Yersinia</taxon>
    </lineage>
</organism>
<gene>
    <name evidence="1" type="primary">rplK</name>
    <name type="ordered locus">YPDSF_3749</name>
</gene>
<accession>A4TS33</accession>
<proteinExistence type="inferred from homology"/>
<keyword id="KW-0488">Methylation</keyword>
<keyword id="KW-0687">Ribonucleoprotein</keyword>
<keyword id="KW-0689">Ribosomal protein</keyword>
<keyword id="KW-0694">RNA-binding</keyword>
<keyword id="KW-0699">rRNA-binding</keyword>
<feature type="chain" id="PRO_1000046294" description="Large ribosomal subunit protein uL11">
    <location>
        <begin position="1"/>
        <end position="142"/>
    </location>
</feature>
<comment type="function">
    <text evidence="1">Forms part of the ribosomal stalk which helps the ribosome interact with GTP-bound translation factors.</text>
</comment>
<comment type="subunit">
    <text evidence="1">Part of the ribosomal stalk of the 50S ribosomal subunit. Interacts with L10 and the large rRNA to form the base of the stalk. L10 forms an elongated spine to which L12 dimers bind in a sequential fashion forming a multimeric L10(L12)X complex.</text>
</comment>
<comment type="PTM">
    <text evidence="1">One or more lysine residues are methylated.</text>
</comment>
<comment type="similarity">
    <text evidence="1">Belongs to the universal ribosomal protein uL11 family.</text>
</comment>